<evidence type="ECO:0000255" key="1">
    <source>
        <dbReference type="HAMAP-Rule" id="MF_00227"/>
    </source>
</evidence>
<dbReference type="EC" id="3.1.26.5" evidence="1"/>
<dbReference type="EMBL" id="AJ000513">
    <property type="protein sequence ID" value="CAA04148.1"/>
    <property type="molecule type" value="Genomic_DNA"/>
</dbReference>
<dbReference type="SMR" id="O86449"/>
<dbReference type="GO" id="GO:0030677">
    <property type="term" value="C:ribonuclease P complex"/>
    <property type="evidence" value="ECO:0007669"/>
    <property type="project" value="TreeGrafter"/>
</dbReference>
<dbReference type="GO" id="GO:0042781">
    <property type="term" value="F:3'-tRNA processing endoribonuclease activity"/>
    <property type="evidence" value="ECO:0007669"/>
    <property type="project" value="TreeGrafter"/>
</dbReference>
<dbReference type="GO" id="GO:0004526">
    <property type="term" value="F:ribonuclease P activity"/>
    <property type="evidence" value="ECO:0007669"/>
    <property type="project" value="UniProtKB-UniRule"/>
</dbReference>
<dbReference type="GO" id="GO:0000049">
    <property type="term" value="F:tRNA binding"/>
    <property type="evidence" value="ECO:0007669"/>
    <property type="project" value="UniProtKB-UniRule"/>
</dbReference>
<dbReference type="GO" id="GO:0001682">
    <property type="term" value="P:tRNA 5'-leader removal"/>
    <property type="evidence" value="ECO:0007669"/>
    <property type="project" value="UniProtKB-UniRule"/>
</dbReference>
<dbReference type="Gene3D" id="3.30.230.10">
    <property type="match status" value="1"/>
</dbReference>
<dbReference type="HAMAP" id="MF_00227">
    <property type="entry name" value="RNase_P"/>
    <property type="match status" value="1"/>
</dbReference>
<dbReference type="InterPro" id="IPR020568">
    <property type="entry name" value="Ribosomal_Su5_D2-typ_SF"/>
</dbReference>
<dbReference type="InterPro" id="IPR014721">
    <property type="entry name" value="Ribsml_uS5_D2-typ_fold_subgr"/>
</dbReference>
<dbReference type="InterPro" id="IPR000100">
    <property type="entry name" value="RNase_P"/>
</dbReference>
<dbReference type="InterPro" id="IPR020539">
    <property type="entry name" value="RNase_P_CS"/>
</dbReference>
<dbReference type="NCBIfam" id="TIGR00188">
    <property type="entry name" value="rnpA"/>
    <property type="match status" value="1"/>
</dbReference>
<dbReference type="PANTHER" id="PTHR33992">
    <property type="entry name" value="RIBONUCLEASE P PROTEIN COMPONENT"/>
    <property type="match status" value="1"/>
</dbReference>
<dbReference type="PANTHER" id="PTHR33992:SF1">
    <property type="entry name" value="RIBONUCLEASE P PROTEIN COMPONENT"/>
    <property type="match status" value="1"/>
</dbReference>
<dbReference type="Pfam" id="PF00825">
    <property type="entry name" value="Ribonuclease_P"/>
    <property type="match status" value="1"/>
</dbReference>
<dbReference type="SUPFAM" id="SSF54211">
    <property type="entry name" value="Ribosomal protein S5 domain 2-like"/>
    <property type="match status" value="1"/>
</dbReference>
<dbReference type="PROSITE" id="PS00648">
    <property type="entry name" value="RIBONUCLEASE_P"/>
    <property type="match status" value="1"/>
</dbReference>
<gene>
    <name evidence="1" type="primary">rnpA</name>
</gene>
<name>RNPA_PSEAO</name>
<accession>O86449</accession>
<organism>
    <name type="scientific">Pseudanabaena sp. (strain PCC 6903)</name>
    <dbReference type="NCBI Taxonomy" id="102126"/>
    <lineage>
        <taxon>Bacteria</taxon>
        <taxon>Bacillati</taxon>
        <taxon>Cyanobacteriota</taxon>
        <taxon>Cyanophyceae</taxon>
        <taxon>Pseudanabaenales</taxon>
        <taxon>Pseudanabaenaceae</taxon>
        <taxon>Pseudanabaena</taxon>
    </lineage>
</organism>
<feature type="chain" id="PRO_0000198510" description="Ribonuclease P protein component">
    <location>
        <begin position="1"/>
        <end position="116"/>
    </location>
</feature>
<protein>
    <recommendedName>
        <fullName evidence="1">Ribonuclease P protein component</fullName>
        <shortName evidence="1">RNase P protein</shortName>
        <shortName evidence="1">RNaseP protein</shortName>
        <ecNumber evidence="1">3.1.26.5</ecNumber>
    </recommendedName>
    <alternativeName>
        <fullName evidence="1">Protein C5</fullName>
    </alternativeName>
</protein>
<proteinExistence type="inferred from homology"/>
<sequence length="116" mass="13353">MLPNQNRLRRREDFAKVYAKGDRYRGTYLSLKILFDSNTTYTRIGIVVSKKVSKLAVTRNRFKRQLRAIFRQLLSQLKDGLQIVVTVTTVASKPNYQELGDDLKNILAKAKVLHGN</sequence>
<keyword id="KW-0255">Endonuclease</keyword>
<keyword id="KW-0378">Hydrolase</keyword>
<keyword id="KW-0540">Nuclease</keyword>
<keyword id="KW-0694">RNA-binding</keyword>
<keyword id="KW-0819">tRNA processing</keyword>
<comment type="function">
    <text evidence="1">RNaseP catalyzes the removal of the 5'-leader sequence from pre-tRNA to produce the mature 5'-terminus. It can also cleave other RNA substrates such as 4.5S RNA. The protein component plays an auxiliary but essential role in vivo by binding to the 5'-leader sequence and broadening the substrate specificity of the ribozyme.</text>
</comment>
<comment type="catalytic activity">
    <reaction evidence="1">
        <text>Endonucleolytic cleavage of RNA, removing 5'-extranucleotides from tRNA precursor.</text>
        <dbReference type="EC" id="3.1.26.5"/>
    </reaction>
</comment>
<comment type="subunit">
    <text evidence="1">Consists of a catalytic RNA component (M1 or rnpB) and a protein subunit.</text>
</comment>
<comment type="similarity">
    <text evidence="1">Belongs to the RnpA family.</text>
</comment>
<reference key="1">
    <citation type="submission" date="1997-07" db="EMBL/GenBank/DDBJ databases">
        <title>Sequence encoding the protein component of RNase P from the cyanobacterium Pseudanabaena sp. PCC6903.</title>
        <authorList>
            <person name="Pascual A."/>
            <person name="Tous C."/>
            <person name="Vioque A."/>
        </authorList>
    </citation>
    <scope>NUCLEOTIDE SEQUENCE [GENOMIC DNA]</scope>
</reference>